<organism>
    <name type="scientific">Mus musculus</name>
    <name type="common">Mouse</name>
    <dbReference type="NCBI Taxonomy" id="10090"/>
    <lineage>
        <taxon>Eukaryota</taxon>
        <taxon>Metazoa</taxon>
        <taxon>Chordata</taxon>
        <taxon>Craniata</taxon>
        <taxon>Vertebrata</taxon>
        <taxon>Euteleostomi</taxon>
        <taxon>Mammalia</taxon>
        <taxon>Eutheria</taxon>
        <taxon>Euarchontoglires</taxon>
        <taxon>Glires</taxon>
        <taxon>Rodentia</taxon>
        <taxon>Myomorpha</taxon>
        <taxon>Muroidea</taxon>
        <taxon>Muridae</taxon>
        <taxon>Murinae</taxon>
        <taxon>Mus</taxon>
        <taxon>Mus</taxon>
    </lineage>
</organism>
<dbReference type="EMBL" id="M92418">
    <property type="status" value="NOT_ANNOTATED_CDS"/>
    <property type="molecule type" value="mRNA"/>
</dbReference>
<dbReference type="EMBL" id="CT033776">
    <property type="status" value="NOT_ANNOTATED_CDS"/>
    <property type="molecule type" value="Genomic_DNA"/>
</dbReference>
<dbReference type="EMBL" id="CH466521">
    <property type="protein sequence ID" value="EDK97921.1"/>
    <property type="molecule type" value="Genomic_DNA"/>
</dbReference>
<dbReference type="EMBL" id="BC138004">
    <property type="protein sequence ID" value="AAI38005.1"/>
    <property type="molecule type" value="mRNA"/>
</dbReference>
<dbReference type="CCDS" id="CCDS37334.1">
    <molecule id="P35174-2"/>
</dbReference>
<dbReference type="PIR" id="B46011">
    <property type="entry name" value="B46011"/>
</dbReference>
<dbReference type="RefSeq" id="NP_001076014.1">
    <molecule id="P35174-2"/>
    <property type="nucleotide sequence ID" value="NM_001082545.1"/>
</dbReference>
<dbReference type="RefSeq" id="XP_006521994.1">
    <property type="nucleotide sequence ID" value="XM_006521931.1"/>
</dbReference>
<dbReference type="SMR" id="P35174"/>
<dbReference type="FunCoup" id="P35174">
    <property type="interactions" value="123"/>
</dbReference>
<dbReference type="STRING" id="10090.ENSMUSP00000078181"/>
<dbReference type="MEROPS" id="I25.001"/>
<dbReference type="jPOST" id="P35174"/>
<dbReference type="PaxDb" id="10090-ENSMUSP00000078181"/>
<dbReference type="ProteomicsDB" id="279162">
    <molecule id="P35174-1"/>
</dbReference>
<dbReference type="ProteomicsDB" id="279163">
    <molecule id="P35174-2"/>
</dbReference>
<dbReference type="DNASU" id="20862"/>
<dbReference type="Ensembl" id="ENSMUST00000023619.8">
    <molecule id="P35174-2"/>
    <property type="protein sequence ID" value="ENSMUSP00000023619.7"/>
    <property type="gene ID" value="ENSMUSG00000022902.9"/>
</dbReference>
<dbReference type="GeneID" id="20862"/>
<dbReference type="KEGG" id="mmu:20862"/>
<dbReference type="UCSC" id="uc007zcn.1">
    <molecule id="P35174-2"/>
    <property type="organism name" value="mouse"/>
</dbReference>
<dbReference type="AGR" id="MGI:106197"/>
<dbReference type="CTD" id="20862"/>
<dbReference type="MGI" id="MGI:106197">
    <property type="gene designation" value="Stfa2"/>
</dbReference>
<dbReference type="VEuPathDB" id="HostDB:ENSMUSG00000022902"/>
<dbReference type="eggNOG" id="ENOG502SF2X">
    <property type="taxonomic scope" value="Eukaryota"/>
</dbReference>
<dbReference type="GeneTree" id="ENSGT00940000155717"/>
<dbReference type="HOGENOM" id="CLU_150234_2_0_1"/>
<dbReference type="InParanoid" id="P35174"/>
<dbReference type="OMA" id="EEPICHF"/>
<dbReference type="OrthoDB" id="23620at9989"/>
<dbReference type="TreeFam" id="TF333174"/>
<dbReference type="Reactome" id="R-MMU-6809371">
    <property type="pathway name" value="Formation of the cornified envelope"/>
</dbReference>
<dbReference type="BioGRID-ORCS" id="20862">
    <property type="hits" value="2 hits in 41 CRISPR screens"/>
</dbReference>
<dbReference type="PRO" id="PR:P35174"/>
<dbReference type="Proteomes" id="UP000000589">
    <property type="component" value="Chromosome 16"/>
</dbReference>
<dbReference type="RNAct" id="P35174">
    <property type="molecule type" value="protein"/>
</dbReference>
<dbReference type="Bgee" id="ENSMUSG00000022902">
    <property type="expression patterns" value="Expressed in granulocyte and 17 other cell types or tissues"/>
</dbReference>
<dbReference type="GO" id="GO:0005737">
    <property type="term" value="C:cytoplasm"/>
    <property type="evidence" value="ECO:0007669"/>
    <property type="project" value="UniProtKB-SubCell"/>
</dbReference>
<dbReference type="GO" id="GO:0004869">
    <property type="term" value="F:cysteine-type endopeptidase inhibitor activity"/>
    <property type="evidence" value="ECO:0007669"/>
    <property type="project" value="UniProtKB-KW"/>
</dbReference>
<dbReference type="GO" id="GO:0004866">
    <property type="term" value="F:endopeptidase inhibitor activity"/>
    <property type="evidence" value="ECO:0000314"/>
    <property type="project" value="MGI"/>
</dbReference>
<dbReference type="CDD" id="cd00042">
    <property type="entry name" value="CY"/>
    <property type="match status" value="1"/>
</dbReference>
<dbReference type="FunFam" id="3.10.450.10:FF:000001">
    <property type="entry name" value="Cystatin-A"/>
    <property type="match status" value="1"/>
</dbReference>
<dbReference type="Gene3D" id="3.10.450.10">
    <property type="match status" value="1"/>
</dbReference>
<dbReference type="InterPro" id="IPR000010">
    <property type="entry name" value="Cystatin_dom"/>
</dbReference>
<dbReference type="InterPro" id="IPR046350">
    <property type="entry name" value="Cystatin_sf"/>
</dbReference>
<dbReference type="InterPro" id="IPR018073">
    <property type="entry name" value="Prot_inh_cystat_CS"/>
</dbReference>
<dbReference type="InterPro" id="IPR001713">
    <property type="entry name" value="Prot_inh_stefin"/>
</dbReference>
<dbReference type="PANTHER" id="PTHR11414">
    <property type="entry name" value="CYSTATIN FAMILY MEMBER"/>
    <property type="match status" value="1"/>
</dbReference>
<dbReference type="PANTHER" id="PTHR11414:SF20">
    <property type="entry name" value="CYSTATIN-A"/>
    <property type="match status" value="1"/>
</dbReference>
<dbReference type="Pfam" id="PF00031">
    <property type="entry name" value="Cystatin"/>
    <property type="match status" value="1"/>
</dbReference>
<dbReference type="PRINTS" id="PR00295">
    <property type="entry name" value="STEFINA"/>
</dbReference>
<dbReference type="SMART" id="SM00043">
    <property type="entry name" value="CY"/>
    <property type="match status" value="1"/>
</dbReference>
<dbReference type="SUPFAM" id="SSF54403">
    <property type="entry name" value="Cystatin/monellin"/>
    <property type="match status" value="1"/>
</dbReference>
<dbReference type="PROSITE" id="PS00287">
    <property type="entry name" value="CYSTATIN"/>
    <property type="match status" value="1"/>
</dbReference>
<accession>P35174</accession>
<accession>B2RQN4</accession>
<accession>E9QMN6</accession>
<evidence type="ECO:0000250" key="1"/>
<evidence type="ECO:0000303" key="2">
    <source>
    </source>
</evidence>
<evidence type="ECO:0000303" key="3">
    <source>
    </source>
</evidence>
<evidence type="ECO:0000305" key="4"/>
<sequence>MTEYTRKIKGGLSEARPATSEIQEIADKVRPLLEEKTNEKYEKFKAIEYKVQVVQGLNYFIKMNVGRGCYLHINVLSGISSENDLELTGYQTNKAKNDELTYF</sequence>
<name>CYT2_MOUSE</name>
<keyword id="KW-0025">Alternative splicing</keyword>
<keyword id="KW-0963">Cytoplasm</keyword>
<keyword id="KW-0646">Protease inhibitor</keyword>
<keyword id="KW-1185">Reference proteome</keyword>
<keyword id="KW-0789">Thiol protease inhibitor</keyword>
<protein>
    <recommendedName>
        <fullName>Stefin-2</fullName>
    </recommendedName>
</protein>
<proteinExistence type="inferred from homology"/>
<comment type="function">
    <text>This is an intracellular thiol proteinase inhibitor.</text>
</comment>
<comment type="subcellular location">
    <subcellularLocation>
        <location evidence="1">Cytoplasm</location>
    </subcellularLocation>
</comment>
<comment type="alternative products">
    <event type="alternative splicing"/>
    <isoform>
        <id>P35174-1</id>
        <name>1</name>
        <sequence type="displayed"/>
    </isoform>
    <isoform>
        <id>P35174-2</id>
        <name>2</name>
        <sequence type="described" ref="VSP_044325"/>
    </isoform>
</comment>
<comment type="similarity">
    <text evidence="4">Belongs to the cystatin family.</text>
</comment>
<reference key="1">
    <citation type="journal article" date="1993" name="Genomics">
        <title>Molecular characterization and mapping of murine genes encoding three members of the stefin family of cysteine proteinase inhibitors.</title>
        <authorList>
            <person name="Tsui F.W."/>
            <person name="Tsui H.W."/>
            <person name="Mok S."/>
            <person name="Mlinaric I."/>
            <person name="Copeland N.G."/>
            <person name="Gilbert D.J."/>
            <person name="Jenkins N.A."/>
            <person name="Siminovitch K.A."/>
        </authorList>
    </citation>
    <scope>NUCLEOTIDE SEQUENCE [MRNA] (ISOFORM 2)</scope>
    <source>
        <strain>C57BL/6J</strain>
        <tissue>Bone marrow</tissue>
    </source>
</reference>
<reference key="2">
    <citation type="journal article" date="2009" name="PLoS Biol.">
        <title>Lineage-specific biology revealed by a finished genome assembly of the mouse.</title>
        <authorList>
            <person name="Church D.M."/>
            <person name="Goodstadt L."/>
            <person name="Hillier L.W."/>
            <person name="Zody M.C."/>
            <person name="Goldstein S."/>
            <person name="She X."/>
            <person name="Bult C.J."/>
            <person name="Agarwala R."/>
            <person name="Cherry J.L."/>
            <person name="DiCuccio M."/>
            <person name="Hlavina W."/>
            <person name="Kapustin Y."/>
            <person name="Meric P."/>
            <person name="Maglott D."/>
            <person name="Birtle Z."/>
            <person name="Marques A.C."/>
            <person name="Graves T."/>
            <person name="Zhou S."/>
            <person name="Teague B."/>
            <person name="Potamousis K."/>
            <person name="Churas C."/>
            <person name="Place M."/>
            <person name="Herschleb J."/>
            <person name="Runnheim R."/>
            <person name="Forrest D."/>
            <person name="Amos-Landgraf J."/>
            <person name="Schwartz D.C."/>
            <person name="Cheng Z."/>
            <person name="Lindblad-Toh K."/>
            <person name="Eichler E.E."/>
            <person name="Ponting C.P."/>
        </authorList>
    </citation>
    <scope>NUCLEOTIDE SEQUENCE [LARGE SCALE GENOMIC DNA]</scope>
    <source>
        <strain>C57BL/6J</strain>
    </source>
</reference>
<reference key="3">
    <citation type="submission" date="2005-07" db="EMBL/GenBank/DDBJ databases">
        <authorList>
            <person name="Mural R.J."/>
            <person name="Adams M.D."/>
            <person name="Myers E.W."/>
            <person name="Smith H.O."/>
            <person name="Venter J.C."/>
        </authorList>
    </citation>
    <scope>NUCLEOTIDE SEQUENCE [LARGE SCALE GENOMIC DNA]</scope>
</reference>
<reference key="4">
    <citation type="journal article" date="2004" name="Genome Res.">
        <title>The status, quality, and expansion of the NIH full-length cDNA project: the Mammalian Gene Collection (MGC).</title>
        <authorList>
            <consortium name="The MGC Project Team"/>
        </authorList>
    </citation>
    <scope>NUCLEOTIDE SEQUENCE [LARGE SCALE MRNA] (ISOFORM 2)</scope>
    <source>
        <tissue>Brain</tissue>
    </source>
</reference>
<feature type="chain" id="PRO_0000207147" description="Stefin-2">
    <location>
        <begin position="1"/>
        <end position="103"/>
    </location>
</feature>
<feature type="short sequence motif" description="Secondary area of contact">
    <location>
        <begin position="52"/>
        <end position="56"/>
    </location>
</feature>
<feature type="site" description="Reactive site" evidence="1">
    <location>
        <position position="10"/>
    </location>
</feature>
<feature type="splice variant" id="VSP_044325" description="In isoform 2." evidence="2 3">
    <original>RKIK</original>
    <variation>IEII</variation>
    <location>
        <begin position="6"/>
        <end position="9"/>
    </location>
</feature>
<feature type="sequence conflict" description="In Ref. 1; M92418." evidence="4" ref="1">
    <original>QTNKAK</original>
    <variation>KAKQTN</variation>
    <location>
        <begin position="91"/>
        <end position="96"/>
    </location>
</feature>
<gene>
    <name type="primary">Stfa2</name>
    <name type="synonym">Stf-2</name>
    <name type="synonym">Stf2</name>
</gene>